<evidence type="ECO:0000255" key="1">
    <source>
        <dbReference type="HAMAP-Rule" id="MF_01890"/>
    </source>
</evidence>
<evidence type="ECO:0000305" key="2"/>
<feature type="signal peptide" evidence="1">
    <location>
        <begin position="1"/>
        <end position="26"/>
    </location>
</feature>
<feature type="chain" id="PRO_0000405948" description="Penicillin-binding protein activator LpoA">
    <location>
        <begin position="27"/>
        <end position="603"/>
    </location>
</feature>
<feature type="lipid moiety-binding region" description="N-palmitoyl cysteine" evidence="1">
    <location>
        <position position="27"/>
    </location>
</feature>
<feature type="lipid moiety-binding region" description="S-diacylglycerol cysteine" evidence="1">
    <location>
        <position position="27"/>
    </location>
</feature>
<organism>
    <name type="scientific">Vibrio cholerae serotype O1 (strain M66-2)</name>
    <dbReference type="NCBI Taxonomy" id="579112"/>
    <lineage>
        <taxon>Bacteria</taxon>
        <taxon>Pseudomonadati</taxon>
        <taxon>Pseudomonadota</taxon>
        <taxon>Gammaproteobacteria</taxon>
        <taxon>Vibrionales</taxon>
        <taxon>Vibrionaceae</taxon>
        <taxon>Vibrio</taxon>
    </lineage>
</organism>
<accession>C3LS71</accession>
<name>LPOA_VIBCM</name>
<dbReference type="EMBL" id="CP001233">
    <property type="protein sequence ID" value="ACP04864.1"/>
    <property type="status" value="ALT_INIT"/>
    <property type="molecule type" value="Genomic_DNA"/>
</dbReference>
<dbReference type="SMR" id="C3LS71"/>
<dbReference type="KEGG" id="vcm:VCM66_0539"/>
<dbReference type="HOGENOM" id="CLU_026091_1_0_6"/>
<dbReference type="Proteomes" id="UP000001217">
    <property type="component" value="Chromosome I"/>
</dbReference>
<dbReference type="GO" id="GO:0031241">
    <property type="term" value="C:periplasmic side of cell outer membrane"/>
    <property type="evidence" value="ECO:0007669"/>
    <property type="project" value="UniProtKB-UniRule"/>
</dbReference>
<dbReference type="GO" id="GO:0030234">
    <property type="term" value="F:enzyme regulator activity"/>
    <property type="evidence" value="ECO:0007669"/>
    <property type="project" value="UniProtKB-UniRule"/>
</dbReference>
<dbReference type="GO" id="GO:0009252">
    <property type="term" value="P:peptidoglycan biosynthetic process"/>
    <property type="evidence" value="ECO:0007669"/>
    <property type="project" value="UniProtKB-UniRule"/>
</dbReference>
<dbReference type="GO" id="GO:0008360">
    <property type="term" value="P:regulation of cell shape"/>
    <property type="evidence" value="ECO:0007669"/>
    <property type="project" value="UniProtKB-KW"/>
</dbReference>
<dbReference type="CDD" id="cd06339">
    <property type="entry name" value="PBP1_YraM_LppC_lipoprotein-like"/>
    <property type="match status" value="1"/>
</dbReference>
<dbReference type="Gene3D" id="1.25.40.650">
    <property type="match status" value="1"/>
</dbReference>
<dbReference type="Gene3D" id="3.40.50.2300">
    <property type="match status" value="2"/>
</dbReference>
<dbReference type="Gene3D" id="1.25.40.10">
    <property type="entry name" value="Tetratricopeptide repeat domain"/>
    <property type="match status" value="1"/>
</dbReference>
<dbReference type="HAMAP" id="MF_01890">
    <property type="entry name" value="LpoA"/>
    <property type="match status" value="1"/>
</dbReference>
<dbReference type="InterPro" id="IPR007443">
    <property type="entry name" value="LpoA"/>
</dbReference>
<dbReference type="InterPro" id="IPR028082">
    <property type="entry name" value="Peripla_BP_I"/>
</dbReference>
<dbReference type="InterPro" id="IPR011990">
    <property type="entry name" value="TPR-like_helical_dom_sf"/>
</dbReference>
<dbReference type="PANTHER" id="PTHR38038">
    <property type="entry name" value="PENICILLIN-BINDING PROTEIN ACTIVATOR LPOA"/>
    <property type="match status" value="1"/>
</dbReference>
<dbReference type="PANTHER" id="PTHR38038:SF1">
    <property type="entry name" value="PENICILLIN-BINDING PROTEIN ACTIVATOR LPOA"/>
    <property type="match status" value="1"/>
</dbReference>
<dbReference type="Pfam" id="PF04348">
    <property type="entry name" value="LppC"/>
    <property type="match status" value="1"/>
</dbReference>
<dbReference type="SUPFAM" id="SSF53822">
    <property type="entry name" value="Periplasmic binding protein-like I"/>
    <property type="match status" value="1"/>
</dbReference>
<gene>
    <name evidence="1" type="primary">lpoA</name>
    <name type="ordered locus">VCM66_0539</name>
</gene>
<sequence>MAMNHHQRRSVPRLLTPIALSIVLSACSTQPSSPDVVDITAQPLLTAQTYLMRADASQGNQQNDWLIMALKAAIEENNPDQAQLLIMRLAKQPLTPTQQAQWQLLRAQLLANTEQYQEALEQLSFQANWSLPQVQWQQYHQLRADIFTALDRSFDSTRELVALYGLSSNKDKEALADQIWANLNHYSASKIIKLSTEPDEAQLDGWLQLAIYMKTLGSDLPQLKNTLEKWLAENPQHPAAIYTPKAITDILALEIVKPTNTALLLPLTGKFAKQAQFIRDGFVFAMMNDADRQTNATLTIIDTNAETLESVDAILTSKQIDFVVGPLIKGNIEKLQQFQQSRGQMIPTLALNIPDQIDTTAGACYLALSPEQEVAQAAKHLFTQGYRYPLILAPQNAYGERVVEAFNEEWRRYSKNKVAVNLFGDKRQLQRNINSIFGLQDSQQNIAQMESLLGMGLESQPRSRRDIDAVYIVANSSELTLIKPFIEVAINPDTRPPKLFSNSNSNTGGRQYEDLSGVTYSDIPLLIQPAPSIKEQLTQIWPESSNAERRLQALGMDAYRLMVELPQMKIVEGYTIDGQTGVLSIDEQCVVQREISWAEHGVR</sequence>
<proteinExistence type="inferred from homology"/>
<reference key="1">
    <citation type="journal article" date="2008" name="PLoS ONE">
        <title>A recalibrated molecular clock and independent origins for the cholera pandemic clones.</title>
        <authorList>
            <person name="Feng L."/>
            <person name="Reeves P.R."/>
            <person name="Lan R."/>
            <person name="Ren Y."/>
            <person name="Gao C."/>
            <person name="Zhou Z."/>
            <person name="Ren Y."/>
            <person name="Cheng J."/>
            <person name="Wang W."/>
            <person name="Wang J."/>
            <person name="Qian W."/>
            <person name="Li D."/>
            <person name="Wang L."/>
        </authorList>
    </citation>
    <scope>NUCLEOTIDE SEQUENCE [LARGE SCALE GENOMIC DNA]</scope>
    <source>
        <strain>M66-2</strain>
    </source>
</reference>
<protein>
    <recommendedName>
        <fullName evidence="1">Penicillin-binding protein activator LpoA</fullName>
        <shortName evidence="1">PBP activator LpoA</shortName>
    </recommendedName>
</protein>
<keyword id="KW-0998">Cell outer membrane</keyword>
<keyword id="KW-0133">Cell shape</keyword>
<keyword id="KW-0449">Lipoprotein</keyword>
<keyword id="KW-0472">Membrane</keyword>
<keyword id="KW-0564">Palmitate</keyword>
<keyword id="KW-0573">Peptidoglycan synthesis</keyword>
<keyword id="KW-0732">Signal</keyword>
<comment type="function">
    <text evidence="1">Regulator of peptidoglycan synthesis that is essential for the function of penicillin-binding protein 1A (PBP1a).</text>
</comment>
<comment type="subunit">
    <text evidence="1">Interacts with PBP1a.</text>
</comment>
<comment type="subcellular location">
    <subcellularLocation>
        <location evidence="1">Cell outer membrane</location>
        <topology evidence="1">Lipid-anchor</topology>
        <orientation evidence="1">Periplasmic side</orientation>
    </subcellularLocation>
</comment>
<comment type="similarity">
    <text evidence="1">Belongs to the LpoA family.</text>
</comment>
<comment type="sequence caution" evidence="2">
    <conflict type="erroneous initiation">
        <sequence resource="EMBL-CDS" id="ACP04864"/>
    </conflict>
    <text>Extended N-terminus.</text>
</comment>